<sequence length="222" mass="24640">MRNHDCPTVRFFKARVYKEKETQMTQTKKAKVRNLIIAAMLTALGILIPMMMPVKLIIGPASFTLAAHVPVMAAMFFSPLMTAFVALGTTLGFMISIPVPTIWLRALMHLPVMTVGAYVLKKYPEFVHQKVKIQIFNFILGIFHAGLETLVVYAFYSLGFANIEQGALLNFLLLIALGGLVHSMIDFNLALGLGNVLSKAFPIDIFDKAKNLVNKKKVKAEI</sequence>
<accession>A2RKV5</accession>
<reference key="1">
    <citation type="journal article" date="2007" name="J. Bacteriol.">
        <title>The complete genome sequence of the lactic acid bacterial paradigm Lactococcus lactis subsp. cremoris MG1363.</title>
        <authorList>
            <person name="Wegmann U."/>
            <person name="O'Connell-Motherway M."/>
            <person name="Zomer A."/>
            <person name="Buist G."/>
            <person name="Shearman C."/>
            <person name="Canchaya C."/>
            <person name="Ventura M."/>
            <person name="Goesmann A."/>
            <person name="Gasson M.J."/>
            <person name="Kuipers O.P."/>
            <person name="van Sinderen D."/>
            <person name="Kok J."/>
        </authorList>
    </citation>
    <scope>NUCLEOTIDE SEQUENCE [LARGE SCALE GENOMIC DNA]</scope>
    <source>
        <strain>MG1363</strain>
    </source>
</reference>
<reference key="2">
    <citation type="journal article" date="2011" name="J. Biol. Chem.">
        <title>Quaternary structure and functional unit of energy coupling factor (ECF)-type transporters.</title>
        <authorList>
            <person name="ter Beek J."/>
            <person name="Duurkens R.H."/>
            <person name="Erkens G.B."/>
            <person name="Slotboom D.J."/>
        </authorList>
    </citation>
    <scope>IDENTIFICATION BY MASS SPECTROMETRY</scope>
    <scope>FUNCTION IN TRANSPORT</scope>
    <scope>SUBUNIT</scope>
    <scope>SUBCELLULAR LOCATION</scope>
    <scope>EXPRESSION IN E.COLI AND L.LACTIS</scope>
    <source>
        <strain>MG1363</strain>
    </source>
</reference>
<protein>
    <recommendedName>
        <fullName>Niacin transporter NiaX</fullName>
    </recommendedName>
    <alternativeName>
        <fullName>Niacin ECF transporter S component NiaX</fullName>
    </alternativeName>
</protein>
<comment type="function">
    <text evidence="2">Probably a niacin-binding protein that interacts with the energy-coupling factor (ECF) ABC-transporter complex. Unlike classic ABC transporters this ECF transporter provides the energy necessary to transport a number of different substrates. The substrates themselves are bound by transmembrane, not extracytoplasmic soluble proteins. Uptake of niacin into proteosomes containing EcfA1A2T and Niax has been demonstrated. Uptake requires hydrolyzable Mg-ATP and is substrate-specific; NiaX-containing proteosomes did not transport riboflavin.</text>
</comment>
<comment type="subunit">
    <text evidence="2">In L.lactis forms a stable complex with EcfA, EcfA' and EcfT. In E.coli forms a stable energy-coupling factor (ECF) transporter complex composed of 2 membrane-embedded substrate-binding proteins (S component), 2 ATP-binding proteins (A and A' components) and 2 transmembrane proteins (T component), probably with a stoichiometry of 2:1:1:2. May be able to interact with more than 1 S component at a time.</text>
</comment>
<comment type="subcellular location">
    <subcellularLocation>
        <location evidence="4">Cell membrane</location>
        <topology evidence="4">Multi-pass membrane protein</topology>
    </subcellularLocation>
</comment>
<comment type="similarity">
    <text evidence="3">Belongs to the vitamin uptake transporter (VUT/ECF) (TC 2.A.88) family.</text>
</comment>
<name>NIAX_LACLM</name>
<feature type="chain" id="PRO_0000409011" description="Niacin transporter NiaX">
    <location>
        <begin position="1"/>
        <end position="222"/>
    </location>
</feature>
<feature type="transmembrane region" description="Helical" evidence="1">
    <location>
        <begin position="34"/>
        <end position="54"/>
    </location>
</feature>
<feature type="transmembrane region" description="Helical" evidence="1">
    <location>
        <begin position="72"/>
        <end position="94"/>
    </location>
</feature>
<feature type="transmembrane region" description="Helical" evidence="1">
    <location>
        <begin position="101"/>
        <end position="120"/>
    </location>
</feature>
<feature type="transmembrane region" description="Helical" evidence="1">
    <location>
        <begin position="135"/>
        <end position="155"/>
    </location>
</feature>
<feature type="transmembrane region" description="Helical" evidence="1">
    <location>
        <begin position="167"/>
        <end position="187"/>
    </location>
</feature>
<evidence type="ECO:0000255" key="1"/>
<evidence type="ECO:0000269" key="2">
    <source>
    </source>
</evidence>
<evidence type="ECO:0000305" key="3"/>
<evidence type="ECO:0000305" key="4">
    <source>
    </source>
</evidence>
<dbReference type="EMBL" id="AM406671">
    <property type="protein sequence ID" value="CAL97921.1"/>
    <property type="molecule type" value="Genomic_DNA"/>
</dbReference>
<dbReference type="SMR" id="A2RKV5"/>
<dbReference type="STRING" id="416870.llmg_1330"/>
<dbReference type="TCDB" id="2.A.88.5.2">
    <property type="family name" value="the vitamin uptake transporter (vut) family"/>
</dbReference>
<dbReference type="KEGG" id="llm:llmg_1330"/>
<dbReference type="eggNOG" id="ENOG50311D4">
    <property type="taxonomic scope" value="Bacteria"/>
</dbReference>
<dbReference type="HOGENOM" id="CLU_118978_0_0_9"/>
<dbReference type="PhylomeDB" id="A2RKV5"/>
<dbReference type="Proteomes" id="UP000000364">
    <property type="component" value="Chromosome"/>
</dbReference>
<dbReference type="GO" id="GO:0005886">
    <property type="term" value="C:plasma membrane"/>
    <property type="evidence" value="ECO:0000314"/>
    <property type="project" value="UniProtKB"/>
</dbReference>
<dbReference type="GO" id="GO:0042626">
    <property type="term" value="F:ATPase-coupled transmembrane transporter activity"/>
    <property type="evidence" value="ECO:0000314"/>
    <property type="project" value="GO_Central"/>
</dbReference>
<dbReference type="FunFam" id="1.10.1760.20:FF:000008">
    <property type="entry name" value="Substrate-specific component NiaX of predicted niacin ECF transporter"/>
    <property type="match status" value="1"/>
</dbReference>
<dbReference type="Gene3D" id="1.10.1760.20">
    <property type="match status" value="1"/>
</dbReference>
<proteinExistence type="evidence at protein level"/>
<gene>
    <name type="primary">niaX</name>
    <name type="ordered locus">llmg_1330</name>
</gene>
<organism>
    <name type="scientific">Lactococcus lactis subsp. cremoris (strain MG1363)</name>
    <dbReference type="NCBI Taxonomy" id="416870"/>
    <lineage>
        <taxon>Bacteria</taxon>
        <taxon>Bacillati</taxon>
        <taxon>Bacillota</taxon>
        <taxon>Bacilli</taxon>
        <taxon>Lactobacillales</taxon>
        <taxon>Streptococcaceae</taxon>
        <taxon>Lactococcus</taxon>
        <taxon>Lactococcus cremoris subsp. cremoris</taxon>
    </lineage>
</organism>
<keyword id="KW-1003">Cell membrane</keyword>
<keyword id="KW-0472">Membrane</keyword>
<keyword id="KW-0812">Transmembrane</keyword>
<keyword id="KW-1133">Transmembrane helix</keyword>
<keyword id="KW-0813">Transport</keyword>